<organism>
    <name type="scientific">Xanthomonas euvesicatoria pv. vesicatoria (strain 85-10)</name>
    <name type="common">Xanthomonas campestris pv. vesicatoria</name>
    <dbReference type="NCBI Taxonomy" id="316273"/>
    <lineage>
        <taxon>Bacteria</taxon>
        <taxon>Pseudomonadati</taxon>
        <taxon>Pseudomonadota</taxon>
        <taxon>Gammaproteobacteria</taxon>
        <taxon>Lysobacterales</taxon>
        <taxon>Lysobacteraceae</taxon>
        <taxon>Xanthomonas</taxon>
    </lineage>
</organism>
<protein>
    <recommendedName>
        <fullName evidence="1">Tryptophan synthase alpha chain</fullName>
        <ecNumber evidence="1">4.2.1.20</ecNumber>
    </recommendedName>
</protein>
<accession>Q3BRL7</accession>
<sequence>MRRIDSCFAELRANGRKALIPFITAGDPSLEATVPVMHALVRAGADVIELGVPFSDPMADGPTIQRSSERALGRGAGLAYVLEAVHEFRREDATTPVVLMGYLNPIEIHGTRRFAEAAVAAGVDGVLLVDLPPEEAGETRAIFTEVGLALIALASPTTSEQRLDMLCSTAQGYLYYVSFAGVTGASNLLDTHAASDRLRQLRQRAGAPVVAGFGIKDAASAAAMAVDADGVVVGSALVAALADAGEVRSARERAEAFLAPLRQALDQK</sequence>
<feature type="chain" id="PRO_1000018307" description="Tryptophan synthase alpha chain">
    <location>
        <begin position="1"/>
        <end position="268"/>
    </location>
</feature>
<feature type="active site" description="Proton acceptor" evidence="1">
    <location>
        <position position="49"/>
    </location>
</feature>
<feature type="active site" description="Proton acceptor" evidence="1">
    <location>
        <position position="60"/>
    </location>
</feature>
<proteinExistence type="inferred from homology"/>
<evidence type="ECO:0000255" key="1">
    <source>
        <dbReference type="HAMAP-Rule" id="MF_00131"/>
    </source>
</evidence>
<keyword id="KW-0028">Amino-acid biosynthesis</keyword>
<keyword id="KW-0057">Aromatic amino acid biosynthesis</keyword>
<keyword id="KW-0456">Lyase</keyword>
<keyword id="KW-0822">Tryptophan biosynthesis</keyword>
<reference key="1">
    <citation type="journal article" date="2005" name="J. Bacteriol.">
        <title>Insights into genome plasticity and pathogenicity of the plant pathogenic Bacterium Xanthomonas campestris pv. vesicatoria revealed by the complete genome sequence.</title>
        <authorList>
            <person name="Thieme F."/>
            <person name="Koebnik R."/>
            <person name="Bekel T."/>
            <person name="Berger C."/>
            <person name="Boch J."/>
            <person name="Buettner D."/>
            <person name="Caldana C."/>
            <person name="Gaigalat L."/>
            <person name="Goesmann A."/>
            <person name="Kay S."/>
            <person name="Kirchner O."/>
            <person name="Lanz C."/>
            <person name="Linke B."/>
            <person name="McHardy A.C."/>
            <person name="Meyer F."/>
            <person name="Mittenhuber G."/>
            <person name="Nies D.H."/>
            <person name="Niesbach-Kloesgen U."/>
            <person name="Patschkowski T."/>
            <person name="Rueckert C."/>
            <person name="Rupp O."/>
            <person name="Schneiker S."/>
            <person name="Schuster S.C."/>
            <person name="Vorhoelter F.J."/>
            <person name="Weber E."/>
            <person name="Puehler A."/>
            <person name="Bonas U."/>
            <person name="Bartels D."/>
            <person name="Kaiser O."/>
        </authorList>
    </citation>
    <scope>NUCLEOTIDE SEQUENCE [LARGE SCALE GENOMIC DNA]</scope>
    <source>
        <strain>85-10</strain>
    </source>
</reference>
<name>TRPA_XANE5</name>
<dbReference type="EC" id="4.2.1.20" evidence="1"/>
<dbReference type="EMBL" id="AM039952">
    <property type="protein sequence ID" value="CAJ24544.1"/>
    <property type="molecule type" value="Genomic_DNA"/>
</dbReference>
<dbReference type="RefSeq" id="WP_008570956.1">
    <property type="nucleotide sequence ID" value="NZ_CP017190.1"/>
</dbReference>
<dbReference type="SMR" id="Q3BRL7"/>
<dbReference type="STRING" id="456327.BJD11_08535"/>
<dbReference type="GeneID" id="63991882"/>
<dbReference type="KEGG" id="xcv:XCV2865"/>
<dbReference type="eggNOG" id="COG0159">
    <property type="taxonomic scope" value="Bacteria"/>
</dbReference>
<dbReference type="HOGENOM" id="CLU_016734_0_4_6"/>
<dbReference type="UniPathway" id="UPA00035">
    <property type="reaction ID" value="UER00044"/>
</dbReference>
<dbReference type="Proteomes" id="UP000007069">
    <property type="component" value="Chromosome"/>
</dbReference>
<dbReference type="GO" id="GO:0005829">
    <property type="term" value="C:cytosol"/>
    <property type="evidence" value="ECO:0007669"/>
    <property type="project" value="TreeGrafter"/>
</dbReference>
<dbReference type="GO" id="GO:0004834">
    <property type="term" value="F:tryptophan synthase activity"/>
    <property type="evidence" value="ECO:0007669"/>
    <property type="project" value="UniProtKB-UniRule"/>
</dbReference>
<dbReference type="CDD" id="cd04724">
    <property type="entry name" value="Tryptophan_synthase_alpha"/>
    <property type="match status" value="1"/>
</dbReference>
<dbReference type="FunFam" id="3.20.20.70:FF:000037">
    <property type="entry name" value="Tryptophan synthase alpha chain"/>
    <property type="match status" value="1"/>
</dbReference>
<dbReference type="Gene3D" id="3.20.20.70">
    <property type="entry name" value="Aldolase class I"/>
    <property type="match status" value="1"/>
</dbReference>
<dbReference type="HAMAP" id="MF_00131">
    <property type="entry name" value="Trp_synth_alpha"/>
    <property type="match status" value="1"/>
</dbReference>
<dbReference type="InterPro" id="IPR013785">
    <property type="entry name" value="Aldolase_TIM"/>
</dbReference>
<dbReference type="InterPro" id="IPR011060">
    <property type="entry name" value="RibuloseP-bd_barrel"/>
</dbReference>
<dbReference type="InterPro" id="IPR018204">
    <property type="entry name" value="Trp_synthase_alpha_AS"/>
</dbReference>
<dbReference type="InterPro" id="IPR002028">
    <property type="entry name" value="Trp_synthase_suA"/>
</dbReference>
<dbReference type="NCBIfam" id="TIGR00262">
    <property type="entry name" value="trpA"/>
    <property type="match status" value="1"/>
</dbReference>
<dbReference type="PANTHER" id="PTHR43406:SF1">
    <property type="entry name" value="TRYPTOPHAN SYNTHASE ALPHA CHAIN, CHLOROPLASTIC"/>
    <property type="match status" value="1"/>
</dbReference>
<dbReference type="PANTHER" id="PTHR43406">
    <property type="entry name" value="TRYPTOPHAN SYNTHASE, ALPHA CHAIN"/>
    <property type="match status" value="1"/>
</dbReference>
<dbReference type="Pfam" id="PF00290">
    <property type="entry name" value="Trp_syntA"/>
    <property type="match status" value="1"/>
</dbReference>
<dbReference type="SUPFAM" id="SSF51366">
    <property type="entry name" value="Ribulose-phoshate binding barrel"/>
    <property type="match status" value="1"/>
</dbReference>
<dbReference type="PROSITE" id="PS00167">
    <property type="entry name" value="TRP_SYNTHASE_ALPHA"/>
    <property type="match status" value="1"/>
</dbReference>
<gene>
    <name evidence="1" type="primary">trpA</name>
    <name type="ordered locus">XCV2865</name>
</gene>
<comment type="function">
    <text evidence="1">The alpha subunit is responsible for the aldol cleavage of indoleglycerol phosphate to indole and glyceraldehyde 3-phosphate.</text>
</comment>
<comment type="catalytic activity">
    <reaction evidence="1">
        <text>(1S,2R)-1-C-(indol-3-yl)glycerol 3-phosphate + L-serine = D-glyceraldehyde 3-phosphate + L-tryptophan + H2O</text>
        <dbReference type="Rhea" id="RHEA:10532"/>
        <dbReference type="ChEBI" id="CHEBI:15377"/>
        <dbReference type="ChEBI" id="CHEBI:33384"/>
        <dbReference type="ChEBI" id="CHEBI:57912"/>
        <dbReference type="ChEBI" id="CHEBI:58866"/>
        <dbReference type="ChEBI" id="CHEBI:59776"/>
        <dbReference type="EC" id="4.2.1.20"/>
    </reaction>
</comment>
<comment type="pathway">
    <text evidence="1">Amino-acid biosynthesis; L-tryptophan biosynthesis; L-tryptophan from chorismate: step 5/5.</text>
</comment>
<comment type="subunit">
    <text evidence="1">Tetramer of two alpha and two beta chains.</text>
</comment>
<comment type="similarity">
    <text evidence="1">Belongs to the TrpA family.</text>
</comment>